<organism>
    <name type="scientific">Sinorhizobium fredii (strain NBRC 101917 / NGR234)</name>
    <dbReference type="NCBI Taxonomy" id="394"/>
    <lineage>
        <taxon>Bacteria</taxon>
        <taxon>Pseudomonadati</taxon>
        <taxon>Pseudomonadota</taxon>
        <taxon>Alphaproteobacteria</taxon>
        <taxon>Hyphomicrobiales</taxon>
        <taxon>Rhizobiaceae</taxon>
        <taxon>Sinorhizobium/Ensifer group</taxon>
        <taxon>Sinorhizobium</taxon>
    </lineage>
</organism>
<proteinExistence type="inferred from homology"/>
<geneLocation type="plasmid">
    <name>sym pNGR234a</name>
</geneLocation>
<keyword id="KW-0233">DNA recombination</keyword>
<keyword id="KW-0238">DNA-binding</keyword>
<keyword id="KW-0614">Plasmid</keyword>
<keyword id="KW-1185">Reference proteome</keyword>
<keyword id="KW-0814">Transposable element</keyword>
<keyword id="KW-0815">Transposition</keyword>
<accession>Q53198</accession>
<reference key="1">
    <citation type="journal article" date="1996" name="Genome Res.">
        <title>Sequencing the 500-kb GC-rich symbiotic replicon of Rhizobium sp. NGR234 using dye terminators and a thermostable 'sequenase': a beginning.</title>
        <authorList>
            <person name="Freiberg C."/>
            <person name="Perret X."/>
            <person name="Broughton W.J."/>
            <person name="Rosenthal A."/>
        </authorList>
    </citation>
    <scope>NUCLEOTIDE SEQUENCE [GENOMIC DNA]</scope>
</reference>
<reference key="2">
    <citation type="journal article" date="1997" name="Nature">
        <title>Molecular basis of symbiosis between Rhizobium and legumes.</title>
        <authorList>
            <person name="Freiberg C.A."/>
            <person name="Fellay R."/>
            <person name="Bairoch A."/>
            <person name="Broughton W.J."/>
            <person name="Rosenthal A."/>
            <person name="Perret X."/>
        </authorList>
    </citation>
    <scope>NUCLEOTIDE SEQUENCE [LARGE SCALE GENOMIC DNA]</scope>
    <source>
        <strain>NBRC 101917 / NGR234</strain>
    </source>
</reference>
<reference key="3">
    <citation type="journal article" date="2009" name="Appl. Environ. Microbiol.">
        <title>Rhizobium sp. strain NGR234 possesses a remarkable number of secretion systems.</title>
        <authorList>
            <person name="Schmeisser C."/>
            <person name="Liesegang H."/>
            <person name="Krysciak D."/>
            <person name="Bakkou N."/>
            <person name="Le Quere A."/>
            <person name="Wollherr A."/>
            <person name="Heinemeyer I."/>
            <person name="Morgenstern B."/>
            <person name="Pommerening-Roeser A."/>
            <person name="Flores M."/>
            <person name="Palacios R."/>
            <person name="Brenner S."/>
            <person name="Gottschalk G."/>
            <person name="Schmitz R.A."/>
            <person name="Broughton W.J."/>
            <person name="Perret X."/>
            <person name="Strittmatter A.W."/>
            <person name="Streit W.R."/>
        </authorList>
    </citation>
    <scope>NUCLEOTIDE SEQUENCE [LARGE SCALE GENOMIC DNA]</scope>
    <source>
        <strain>NBRC 101917 / NGR234</strain>
    </source>
</reference>
<protein>
    <recommendedName>
        <fullName>Putative transposase y4uE</fullName>
    </recommendedName>
</protein>
<name>Y4UE_SINFN</name>
<feature type="chain" id="PRO_0000075521" description="Putative transposase y4uE">
    <location>
        <begin position="1"/>
        <end position="359"/>
    </location>
</feature>
<feature type="region of interest" description="Disordered" evidence="1">
    <location>
        <begin position="1"/>
        <end position="31"/>
    </location>
</feature>
<feature type="region of interest" description="Disordered" evidence="1">
    <location>
        <begin position="318"/>
        <end position="359"/>
    </location>
</feature>
<gene>
    <name type="ordered locus">NGR_a01350</name>
    <name type="ORF">y4uE</name>
</gene>
<sequence length="359" mass="39805">MGDGPNWRSLPEPSRFVGSDPSPPVPRAPGGDTCPVGLAVIDAPWGVRAGPVLFRAPVQGSAKIAVARMLERGEGMTDQRHCYAGVDWASESHHVFLTDGDGRKIGERVFRHGGEGLAEMAAWLMATSGAVEGDEIQVAIEVPHGPVVETLIERGFKVNAINPKQMDRFRDRFTMAGAKDDSRDAEVMASALRTDPRCFRLLAVSDPVVIELREWSRIAEDLSAERNRLTNRMREQLWRYFPALLELENDLGAEWLLDLWDTVPTPDKAARIREATIAKLLKRHRIRRFDAPPCARYIAPAAAQGRRRNDRIRQRPRHYAHCPHPPRQPAAQTGASSAGWPDRQPHRNRAGGAGAEEAA</sequence>
<comment type="similarity">
    <text evidence="2">Belongs to the transposase 9 family.</text>
</comment>
<evidence type="ECO:0000256" key="1">
    <source>
        <dbReference type="SAM" id="MobiDB-lite"/>
    </source>
</evidence>
<evidence type="ECO:0000305" key="2"/>
<dbReference type="EMBL" id="Z68203">
    <property type="protein sequence ID" value="CAA92405.1"/>
    <property type="molecule type" value="Genomic_DNA"/>
</dbReference>
<dbReference type="EMBL" id="U00090">
    <property type="protein sequence ID" value="AAB91877.1"/>
    <property type="molecule type" value="Genomic_DNA"/>
</dbReference>
<dbReference type="RefSeq" id="NP_444090.1">
    <property type="nucleotide sequence ID" value="NC_000914.2"/>
</dbReference>
<dbReference type="SMR" id="Q53198"/>
<dbReference type="STRING" id="394.NGR_c04970"/>
<dbReference type="KEGG" id="rhi:NGR_a01350"/>
<dbReference type="PATRIC" id="fig|394.7.peg.119"/>
<dbReference type="eggNOG" id="COG3547">
    <property type="taxonomic scope" value="Bacteria"/>
</dbReference>
<dbReference type="HOGENOM" id="CLU_771336_0_0_5"/>
<dbReference type="OrthoDB" id="6637920at2"/>
<dbReference type="Proteomes" id="UP000001054">
    <property type="component" value="Plasmid pNGR234a"/>
</dbReference>
<dbReference type="GO" id="GO:0003677">
    <property type="term" value="F:DNA binding"/>
    <property type="evidence" value="ECO:0007669"/>
    <property type="project" value="UniProtKB-KW"/>
</dbReference>
<dbReference type="GO" id="GO:0004803">
    <property type="term" value="F:transposase activity"/>
    <property type="evidence" value="ECO:0007669"/>
    <property type="project" value="InterPro"/>
</dbReference>
<dbReference type="GO" id="GO:0006313">
    <property type="term" value="P:DNA transposition"/>
    <property type="evidence" value="ECO:0007669"/>
    <property type="project" value="InterPro"/>
</dbReference>
<dbReference type="InterPro" id="IPR002525">
    <property type="entry name" value="Transp_IS110-like_N"/>
</dbReference>
<dbReference type="InterPro" id="IPR047650">
    <property type="entry name" value="Transpos_IS110"/>
</dbReference>
<dbReference type="PANTHER" id="PTHR33055:SF3">
    <property type="entry name" value="PUTATIVE TRANSPOSASE FOR IS117-RELATED"/>
    <property type="match status" value="1"/>
</dbReference>
<dbReference type="PANTHER" id="PTHR33055">
    <property type="entry name" value="TRANSPOSASE FOR INSERTION SEQUENCE ELEMENT IS1111A"/>
    <property type="match status" value="1"/>
</dbReference>
<dbReference type="Pfam" id="PF01548">
    <property type="entry name" value="DEDD_Tnp_IS110"/>
    <property type="match status" value="1"/>
</dbReference>